<evidence type="ECO:0000250" key="1"/>
<evidence type="ECO:0000255" key="2"/>
<evidence type="ECO:0000256" key="3">
    <source>
        <dbReference type="SAM" id="MobiDB-lite"/>
    </source>
</evidence>
<evidence type="ECO:0000305" key="4"/>
<gene>
    <name type="primary">dapB</name>
    <name type="ORF">AFUB_041260</name>
</gene>
<accession>B0XYK8</accession>
<proteinExistence type="inferred from homology"/>
<protein>
    <recommendedName>
        <fullName>Probable dipeptidyl-aminopeptidase B</fullName>
        <shortName>DPAP B</shortName>
        <ecNumber>3.4.14.5</ecNumber>
    </recommendedName>
</protein>
<name>DAPB_ASPFC</name>
<feature type="chain" id="PRO_0000412133" description="Probable dipeptidyl-aminopeptidase B">
    <location>
        <begin position="1"/>
        <end position="919"/>
    </location>
</feature>
<feature type="topological domain" description="Cytoplasmic" evidence="2">
    <location>
        <begin position="1"/>
        <end position="92"/>
    </location>
</feature>
<feature type="transmembrane region" description="Helical; Signal-anchor for type II membrane protein" evidence="2">
    <location>
        <begin position="93"/>
        <end position="113"/>
    </location>
</feature>
<feature type="topological domain" description="Vacuolar" evidence="2">
    <location>
        <begin position="114"/>
        <end position="919"/>
    </location>
</feature>
<feature type="region of interest" description="Disordered" evidence="3">
    <location>
        <begin position="1"/>
        <end position="53"/>
    </location>
</feature>
<feature type="compositionally biased region" description="Basic and acidic residues" evidence="3">
    <location>
        <begin position="1"/>
        <end position="10"/>
    </location>
</feature>
<feature type="compositionally biased region" description="Low complexity" evidence="3">
    <location>
        <begin position="21"/>
        <end position="38"/>
    </location>
</feature>
<feature type="active site" description="Charge relay system" evidence="1">
    <location>
        <position position="757"/>
    </location>
</feature>
<feature type="active site" description="Charge relay system" evidence="1">
    <location>
        <position position="834"/>
    </location>
</feature>
<feature type="active site" description="Charge relay system" evidence="1">
    <location>
        <position position="867"/>
    </location>
</feature>
<feature type="glycosylation site" description="N-linked (GlcNAc...) asparagine" evidence="2">
    <location>
        <position position="200"/>
    </location>
</feature>
<feature type="glycosylation site" description="N-linked (GlcNAc...) asparagine" evidence="2">
    <location>
        <position position="352"/>
    </location>
</feature>
<feature type="glycosylation site" description="N-linked (GlcNAc...) asparagine" evidence="2">
    <location>
        <position position="643"/>
    </location>
</feature>
<feature type="glycosylation site" description="N-linked (GlcNAc...) asparagine" evidence="2">
    <location>
        <position position="811"/>
    </location>
</feature>
<organism>
    <name type="scientific">Aspergillus fumigatus (strain CBS 144.89 / FGSC A1163 / CEA10)</name>
    <name type="common">Neosartorya fumigata</name>
    <dbReference type="NCBI Taxonomy" id="451804"/>
    <lineage>
        <taxon>Eukaryota</taxon>
        <taxon>Fungi</taxon>
        <taxon>Dikarya</taxon>
        <taxon>Ascomycota</taxon>
        <taxon>Pezizomycotina</taxon>
        <taxon>Eurotiomycetes</taxon>
        <taxon>Eurotiomycetidae</taxon>
        <taxon>Eurotiales</taxon>
        <taxon>Aspergillaceae</taxon>
        <taxon>Aspergillus</taxon>
        <taxon>Aspergillus subgen. Fumigati</taxon>
    </lineage>
</organism>
<keyword id="KW-0031">Aminopeptidase</keyword>
<keyword id="KW-0325">Glycoprotein</keyword>
<keyword id="KW-0378">Hydrolase</keyword>
<keyword id="KW-0472">Membrane</keyword>
<keyword id="KW-0645">Protease</keyword>
<keyword id="KW-0720">Serine protease</keyword>
<keyword id="KW-0735">Signal-anchor</keyword>
<keyword id="KW-0812">Transmembrane</keyword>
<keyword id="KW-1133">Transmembrane helix</keyword>
<keyword id="KW-0926">Vacuole</keyword>
<dbReference type="EC" id="3.4.14.5"/>
<dbReference type="EMBL" id="DS499596">
    <property type="protein sequence ID" value="EDP52954.1"/>
    <property type="molecule type" value="Genomic_DNA"/>
</dbReference>
<dbReference type="SMR" id="B0XYK8"/>
<dbReference type="ESTHER" id="aspfu-q4wx13">
    <property type="family name" value="DPP4N_Peptidase_S9"/>
</dbReference>
<dbReference type="MEROPS" id="S09.006"/>
<dbReference type="GlyCosmos" id="B0XYK8">
    <property type="glycosylation" value="4 sites, No reported glycans"/>
</dbReference>
<dbReference type="EnsemblFungi" id="EDP52954">
    <property type="protein sequence ID" value="EDP52954"/>
    <property type="gene ID" value="AFUB_041260"/>
</dbReference>
<dbReference type="VEuPathDB" id="FungiDB:AFUB_041260"/>
<dbReference type="HOGENOM" id="CLU_006105_0_1_1"/>
<dbReference type="OrthoDB" id="38931at5052"/>
<dbReference type="PhylomeDB" id="B0XYK8"/>
<dbReference type="Proteomes" id="UP000001699">
    <property type="component" value="Unassembled WGS sequence"/>
</dbReference>
<dbReference type="GO" id="GO:0000329">
    <property type="term" value="C:fungal-type vacuole membrane"/>
    <property type="evidence" value="ECO:0007669"/>
    <property type="project" value="EnsemblFungi"/>
</dbReference>
<dbReference type="GO" id="GO:0005886">
    <property type="term" value="C:plasma membrane"/>
    <property type="evidence" value="ECO:0007669"/>
    <property type="project" value="TreeGrafter"/>
</dbReference>
<dbReference type="GO" id="GO:0004177">
    <property type="term" value="F:aminopeptidase activity"/>
    <property type="evidence" value="ECO:0007669"/>
    <property type="project" value="UniProtKB-KW"/>
</dbReference>
<dbReference type="GO" id="GO:0008239">
    <property type="term" value="F:dipeptidyl-peptidase activity"/>
    <property type="evidence" value="ECO:0007669"/>
    <property type="project" value="UniProtKB-EC"/>
</dbReference>
<dbReference type="GO" id="GO:0008236">
    <property type="term" value="F:serine-type peptidase activity"/>
    <property type="evidence" value="ECO:0007669"/>
    <property type="project" value="UniProtKB-KW"/>
</dbReference>
<dbReference type="GO" id="GO:0006508">
    <property type="term" value="P:proteolysis"/>
    <property type="evidence" value="ECO:0007669"/>
    <property type="project" value="UniProtKB-KW"/>
</dbReference>
<dbReference type="FunFam" id="3.40.50.1820:FF:000003">
    <property type="entry name" value="Dipeptidyl peptidase 4"/>
    <property type="match status" value="1"/>
</dbReference>
<dbReference type="Gene3D" id="3.40.50.1820">
    <property type="entry name" value="alpha/beta hydrolase"/>
    <property type="match status" value="1"/>
</dbReference>
<dbReference type="Gene3D" id="2.140.10.30">
    <property type="entry name" value="Dipeptidylpeptidase IV, N-terminal domain"/>
    <property type="match status" value="1"/>
</dbReference>
<dbReference type="InterPro" id="IPR029058">
    <property type="entry name" value="AB_hydrolase_fold"/>
</dbReference>
<dbReference type="InterPro" id="IPR001375">
    <property type="entry name" value="Peptidase_S9_cat"/>
</dbReference>
<dbReference type="InterPro" id="IPR002469">
    <property type="entry name" value="Peptidase_S9B_N"/>
</dbReference>
<dbReference type="InterPro" id="IPR050278">
    <property type="entry name" value="Serine_Prot_S9B/DPPIV"/>
</dbReference>
<dbReference type="PANTHER" id="PTHR11731:SF200">
    <property type="entry name" value="DIPEPTIDYL PEPTIDASE 10, ISOFORM B"/>
    <property type="match status" value="1"/>
</dbReference>
<dbReference type="PANTHER" id="PTHR11731">
    <property type="entry name" value="PROTEASE FAMILY S9B,C DIPEPTIDYL-PEPTIDASE IV-RELATED"/>
    <property type="match status" value="1"/>
</dbReference>
<dbReference type="Pfam" id="PF00930">
    <property type="entry name" value="DPPIV_N"/>
    <property type="match status" value="1"/>
</dbReference>
<dbReference type="Pfam" id="PF00326">
    <property type="entry name" value="Peptidase_S9"/>
    <property type="match status" value="1"/>
</dbReference>
<dbReference type="SUPFAM" id="SSF53474">
    <property type="entry name" value="alpha/beta-Hydrolases"/>
    <property type="match status" value="1"/>
</dbReference>
<dbReference type="SUPFAM" id="SSF82171">
    <property type="entry name" value="DPP6 N-terminal domain-like"/>
    <property type="match status" value="1"/>
</dbReference>
<comment type="function">
    <text evidence="1">Type IV dipeptidyl-peptidase which removes N-terminal dipeptides sequentially from polypeptides having unsubstituted N-termini provided that the penultimate residue is proline.</text>
</comment>
<comment type="catalytic activity">
    <reaction>
        <text>Release of an N-terminal dipeptide, Xaa-Yaa-|-Zaa-, from a polypeptide, preferentially when Yaa is Pro, provided Zaa is neither Pro nor hydroxyproline.</text>
        <dbReference type="EC" id="3.4.14.5"/>
    </reaction>
</comment>
<comment type="subcellular location">
    <subcellularLocation>
        <location evidence="1">Vacuole membrane</location>
        <topology evidence="1">Single-pass type II membrane protein</topology>
    </subcellularLocation>
    <text evidence="1">Lysosome-like vacuoles.</text>
</comment>
<comment type="similarity">
    <text evidence="4">Belongs to the peptidase S9B family.</text>
</comment>
<reference key="1">
    <citation type="journal article" date="2008" name="PLoS Genet.">
        <title>Genomic islands in the pathogenic filamentous fungus Aspergillus fumigatus.</title>
        <authorList>
            <person name="Fedorova N.D."/>
            <person name="Khaldi N."/>
            <person name="Joardar V.S."/>
            <person name="Maiti R."/>
            <person name="Amedeo P."/>
            <person name="Anderson M.J."/>
            <person name="Crabtree J."/>
            <person name="Silva J.C."/>
            <person name="Badger J.H."/>
            <person name="Albarraq A."/>
            <person name="Angiuoli S."/>
            <person name="Bussey H."/>
            <person name="Bowyer P."/>
            <person name="Cotty P.J."/>
            <person name="Dyer P.S."/>
            <person name="Egan A."/>
            <person name="Galens K."/>
            <person name="Fraser-Liggett C.M."/>
            <person name="Haas B.J."/>
            <person name="Inman J.M."/>
            <person name="Kent R."/>
            <person name="Lemieux S."/>
            <person name="Malavazi I."/>
            <person name="Orvis J."/>
            <person name="Roemer T."/>
            <person name="Ronning C.M."/>
            <person name="Sundaram J.P."/>
            <person name="Sutton G."/>
            <person name="Turner G."/>
            <person name="Venter J.C."/>
            <person name="White O.R."/>
            <person name="Whitty B.R."/>
            <person name="Youngman P."/>
            <person name="Wolfe K.H."/>
            <person name="Goldman G.H."/>
            <person name="Wortman J.R."/>
            <person name="Jiang B."/>
            <person name="Denning D.W."/>
            <person name="Nierman W.C."/>
        </authorList>
    </citation>
    <scope>NUCLEOTIDE SEQUENCE [LARGE SCALE GENOMIC DNA]</scope>
    <source>
        <strain>CBS 144.89 / FGSC A1163 / CEA10</strain>
    </source>
</reference>
<sequence length="919" mass="103089">MRRSDGHEETSEFLPMTHSRSVSAASQTSTDSSLSTESLFPREQKPFPNAMGGMALADDDKYRDLEDGEAELSEPFLSSSKKAATGGGRARRIFWILVLLCLGGWLLAFVLFLTGGRANYQTASDALQAHGADSALGSTSTSSGKPVTLQQVLGGQWNPRYHAIGWVAGPNNEDGLLVEKGGDEKQGYLRVDDIRSRKGNNTGRESRVLMRKPIVHVDGQAIVPSNVWPSPDLKKVLLISEQQKNWRHSFTGKYWVFDVDSQTAQPLDPSAPDGRVQLALWSPASDAVVFVRDNNLYLRRLSSDSVVAITKDGGENLFYGVPDWVYEEEVISGNSVTWWSNDAKYIAFFRTNETSVPEFPVQYYISRPSGKKPLPGLENYPDVREIKYPKPGAPNPVVDLQFYDVEKNEVFSVQVADDFADDDRIIIEVLWASEGKILVRSTNRESDILKVYLIDTQSRTGKLVRSEDVAGLDGGWVEPSQSTRFVPADPNNGRPHDGYIDTVPYNGYDHLAYFSPLDNPNALMLTSGEWEVVDAPAAVDLQRGLVYFVGTKEAPTQRHVYRVQLDGSNLNPLTDTSKPGYYDVSFSHGTGYALLTYKGPSIPWQAIINTHGDEITYEDRIEDNAQLTKMVEAYALPTEVYQNVTVDGYTLQVVERRPPHFNPAKKYPVLFYLYGGPGSQTVDRKFTVDFQSYVASSLGYIVVTVDGRGTGFIGRKARCIVRGNLGFYEAHDQIATAKMWAAKSYVDETRMAIWGWSFGGFMTLKTLEQDAGRTFQYGMAVAPVTDWRFYDSIYTERYMHTPQHNPNGYDNSTITDMAALSESVRFLVMHGASDDNVHLQNTLVLIDKLDLSNVENYDVQFYPDSDHSIYFHNAHMMVYHRLSDWLVNAFNGEWHLIAKPVPDESMWERMKRSLRLLSP</sequence>